<name>KLF3_HUMAN</name>
<evidence type="ECO:0000250" key="1"/>
<evidence type="ECO:0000250" key="2">
    <source>
        <dbReference type="UniProtKB" id="Q60980"/>
    </source>
</evidence>
<evidence type="ECO:0000255" key="3">
    <source>
        <dbReference type="PROSITE-ProRule" id="PRU00042"/>
    </source>
</evidence>
<evidence type="ECO:0000256" key="4">
    <source>
        <dbReference type="SAM" id="MobiDB-lite"/>
    </source>
</evidence>
<evidence type="ECO:0000269" key="5">
    <source>
    </source>
</evidence>
<evidence type="ECO:0000303" key="6">
    <source>
    </source>
</evidence>
<evidence type="ECO:0000305" key="7"/>
<evidence type="ECO:0007744" key="8">
    <source>
    </source>
</evidence>
<evidence type="ECO:0007744" key="9">
    <source>
    </source>
</evidence>
<evidence type="ECO:0007744" key="10">
    <source>
    </source>
</evidence>
<evidence type="ECO:0007744" key="11">
    <source>
    </source>
</evidence>
<evidence type="ECO:0007744" key="12">
    <source>
    </source>
</evidence>
<evidence type="ECO:0007744" key="13">
    <source>
    </source>
</evidence>
<keyword id="KW-0010">Activator</keyword>
<keyword id="KW-0025">Alternative splicing</keyword>
<keyword id="KW-0238">DNA-binding</keyword>
<keyword id="KW-1017">Isopeptide bond</keyword>
<keyword id="KW-0479">Metal-binding</keyword>
<keyword id="KW-0539">Nucleus</keyword>
<keyword id="KW-0597">Phosphoprotein</keyword>
<keyword id="KW-1267">Proteomics identification</keyword>
<keyword id="KW-1185">Reference proteome</keyword>
<keyword id="KW-0677">Repeat</keyword>
<keyword id="KW-0678">Repressor</keyword>
<keyword id="KW-0804">Transcription</keyword>
<keyword id="KW-0805">Transcription regulation</keyword>
<keyword id="KW-0832">Ubl conjugation</keyword>
<keyword id="KW-0862">Zinc</keyword>
<keyword id="KW-0863">Zinc-finger</keyword>
<gene>
    <name type="primary">KLF3</name>
    <name type="synonym">BKLF</name>
</gene>
<dbReference type="EMBL" id="AB024523">
    <property type="protein sequence ID" value="BAA92271.1"/>
    <property type="molecule type" value="mRNA"/>
</dbReference>
<dbReference type="EMBL" id="AF285837">
    <property type="protein sequence ID" value="AAK27329.1"/>
    <property type="molecule type" value="mRNA"/>
</dbReference>
<dbReference type="EMBL" id="BC030662">
    <property type="protein sequence ID" value="AAH30662.1"/>
    <property type="molecule type" value="mRNA"/>
</dbReference>
<dbReference type="EMBL" id="BC051687">
    <property type="protein sequence ID" value="AAH51687.1"/>
    <property type="molecule type" value="mRNA"/>
</dbReference>
<dbReference type="CCDS" id="CCDS3444.1">
    <molecule id="P57682-1"/>
</dbReference>
<dbReference type="RefSeq" id="NP_057615.3">
    <molecule id="P57682-1"/>
    <property type="nucleotide sequence ID" value="NM_016531.5"/>
</dbReference>
<dbReference type="SMR" id="P57682"/>
<dbReference type="BioGRID" id="119426">
    <property type="interactions" value="225"/>
</dbReference>
<dbReference type="FunCoup" id="P57682">
    <property type="interactions" value="1249"/>
</dbReference>
<dbReference type="IntAct" id="P57682">
    <property type="interactions" value="176"/>
</dbReference>
<dbReference type="MINT" id="P57682"/>
<dbReference type="STRING" id="9606.ENSP00000261438"/>
<dbReference type="GlyGen" id="P57682">
    <property type="glycosylation" value="1 site, 1 O-linked glycan (1 site)"/>
</dbReference>
<dbReference type="iPTMnet" id="P57682"/>
<dbReference type="PhosphoSitePlus" id="P57682"/>
<dbReference type="BioMuta" id="KLF3"/>
<dbReference type="DMDM" id="12644533"/>
<dbReference type="jPOST" id="P57682"/>
<dbReference type="MassIVE" id="P57682"/>
<dbReference type="PaxDb" id="9606-ENSP00000261438"/>
<dbReference type="PeptideAtlas" id="P57682"/>
<dbReference type="ProteomicsDB" id="57007">
    <molecule id="P57682-1"/>
</dbReference>
<dbReference type="ProteomicsDB" id="57008">
    <molecule id="P57682-2"/>
</dbReference>
<dbReference type="Pumba" id="P57682"/>
<dbReference type="Antibodypedia" id="10444">
    <property type="antibodies" value="179 antibodies from 28 providers"/>
</dbReference>
<dbReference type="DNASU" id="51274"/>
<dbReference type="Ensembl" id="ENST00000261438.10">
    <molecule id="P57682-1"/>
    <property type="protein sequence ID" value="ENSP00000261438.5"/>
    <property type="gene ID" value="ENSG00000109787.13"/>
</dbReference>
<dbReference type="Ensembl" id="ENST00000514033.1">
    <molecule id="P57682-2"/>
    <property type="protein sequence ID" value="ENSP00000421252.1"/>
    <property type="gene ID" value="ENSG00000109787.13"/>
</dbReference>
<dbReference type="GeneID" id="51274"/>
<dbReference type="KEGG" id="hsa:51274"/>
<dbReference type="MANE-Select" id="ENST00000261438.10">
    <property type="protein sequence ID" value="ENSP00000261438.5"/>
    <property type="RefSeq nucleotide sequence ID" value="NM_016531.6"/>
    <property type="RefSeq protein sequence ID" value="NP_057615.3"/>
</dbReference>
<dbReference type="UCSC" id="uc003gtg.3">
    <molecule id="P57682-1"/>
    <property type="organism name" value="human"/>
</dbReference>
<dbReference type="AGR" id="HGNC:16516"/>
<dbReference type="CTD" id="51274"/>
<dbReference type="DisGeNET" id="51274"/>
<dbReference type="GeneCards" id="KLF3"/>
<dbReference type="HGNC" id="HGNC:16516">
    <property type="gene designation" value="KLF3"/>
</dbReference>
<dbReference type="HPA" id="ENSG00000109787">
    <property type="expression patterns" value="Low tissue specificity"/>
</dbReference>
<dbReference type="MIM" id="609392">
    <property type="type" value="gene"/>
</dbReference>
<dbReference type="neXtProt" id="NX_P57682"/>
<dbReference type="OpenTargets" id="ENSG00000109787"/>
<dbReference type="PharmGKB" id="PA30137"/>
<dbReference type="VEuPathDB" id="HostDB:ENSG00000109787"/>
<dbReference type="eggNOG" id="KOG1721">
    <property type="taxonomic scope" value="Eukaryota"/>
</dbReference>
<dbReference type="GeneTree" id="ENSGT00940000157456"/>
<dbReference type="HOGENOM" id="CLU_002678_33_0_1"/>
<dbReference type="InParanoid" id="P57682"/>
<dbReference type="OMA" id="FMYASHL"/>
<dbReference type="OrthoDB" id="4748970at2759"/>
<dbReference type="PAN-GO" id="P57682">
    <property type="GO annotations" value="3 GO annotations based on evolutionary models"/>
</dbReference>
<dbReference type="PhylomeDB" id="P57682"/>
<dbReference type="TreeFam" id="TF350556"/>
<dbReference type="PathwayCommons" id="P57682"/>
<dbReference type="SignaLink" id="P57682"/>
<dbReference type="SIGNOR" id="P57682"/>
<dbReference type="BioGRID-ORCS" id="51274">
    <property type="hits" value="29 hits in 1176 CRISPR screens"/>
</dbReference>
<dbReference type="ChiTaRS" id="KLF3">
    <property type="organism name" value="human"/>
</dbReference>
<dbReference type="GeneWiki" id="KLF3"/>
<dbReference type="GenomeRNAi" id="51274"/>
<dbReference type="Pharos" id="P57682">
    <property type="development level" value="Tbio"/>
</dbReference>
<dbReference type="PRO" id="PR:P57682"/>
<dbReference type="Proteomes" id="UP000005640">
    <property type="component" value="Chromosome 4"/>
</dbReference>
<dbReference type="RNAct" id="P57682">
    <property type="molecule type" value="protein"/>
</dbReference>
<dbReference type="Bgee" id="ENSG00000109787">
    <property type="expression patterns" value="Expressed in upper leg skin and 197 other cell types or tissues"/>
</dbReference>
<dbReference type="GO" id="GO:0000785">
    <property type="term" value="C:chromatin"/>
    <property type="evidence" value="ECO:0000247"/>
    <property type="project" value="NTNU_SB"/>
</dbReference>
<dbReference type="GO" id="GO:0005654">
    <property type="term" value="C:nucleoplasm"/>
    <property type="evidence" value="ECO:0000314"/>
    <property type="project" value="HPA"/>
</dbReference>
<dbReference type="GO" id="GO:0003700">
    <property type="term" value="F:DNA-binding transcription factor activity"/>
    <property type="evidence" value="ECO:0000303"/>
    <property type="project" value="ProtInc"/>
</dbReference>
<dbReference type="GO" id="GO:0000981">
    <property type="term" value="F:DNA-binding transcription factor activity, RNA polymerase II-specific"/>
    <property type="evidence" value="ECO:0000247"/>
    <property type="project" value="NTNU_SB"/>
</dbReference>
<dbReference type="GO" id="GO:0000978">
    <property type="term" value="F:RNA polymerase II cis-regulatory region sequence-specific DNA binding"/>
    <property type="evidence" value="ECO:0000318"/>
    <property type="project" value="GO_Central"/>
</dbReference>
<dbReference type="GO" id="GO:1990837">
    <property type="term" value="F:sequence-specific double-stranded DNA binding"/>
    <property type="evidence" value="ECO:0000314"/>
    <property type="project" value="ARUK-UCL"/>
</dbReference>
<dbReference type="GO" id="GO:0008270">
    <property type="term" value="F:zinc ion binding"/>
    <property type="evidence" value="ECO:0007669"/>
    <property type="project" value="UniProtKB-KW"/>
</dbReference>
<dbReference type="GO" id="GO:1901653">
    <property type="term" value="P:cellular response to peptide"/>
    <property type="evidence" value="ECO:0007669"/>
    <property type="project" value="Ensembl"/>
</dbReference>
<dbReference type="GO" id="GO:0030097">
    <property type="term" value="P:hemopoiesis"/>
    <property type="evidence" value="ECO:0000304"/>
    <property type="project" value="ProtInc"/>
</dbReference>
<dbReference type="GO" id="GO:0000122">
    <property type="term" value="P:negative regulation of transcription by RNA polymerase II"/>
    <property type="evidence" value="ECO:0007669"/>
    <property type="project" value="Ensembl"/>
</dbReference>
<dbReference type="GO" id="GO:0006357">
    <property type="term" value="P:regulation of transcription by RNA polymerase II"/>
    <property type="evidence" value="ECO:0000318"/>
    <property type="project" value="GO_Central"/>
</dbReference>
<dbReference type="CDD" id="cd21577">
    <property type="entry name" value="KLF3_N"/>
    <property type="match status" value="1"/>
</dbReference>
<dbReference type="FunFam" id="3.30.160.60:FF:000021">
    <property type="entry name" value="Basic krueppel-like factor 3"/>
    <property type="match status" value="1"/>
</dbReference>
<dbReference type="FunFam" id="3.30.160.60:FF:000018">
    <property type="entry name" value="Krueppel-like factor 15"/>
    <property type="match status" value="1"/>
</dbReference>
<dbReference type="FunFam" id="3.30.160.60:FF:000563">
    <property type="entry name" value="Krueppel-like factor 8"/>
    <property type="match status" value="1"/>
</dbReference>
<dbReference type="Gene3D" id="3.30.160.60">
    <property type="entry name" value="Classic Zinc Finger"/>
    <property type="match status" value="3"/>
</dbReference>
<dbReference type="InterPro" id="IPR036236">
    <property type="entry name" value="Znf_C2H2_sf"/>
</dbReference>
<dbReference type="InterPro" id="IPR013087">
    <property type="entry name" value="Znf_C2H2_type"/>
</dbReference>
<dbReference type="PANTHER" id="PTHR23235:SF48">
    <property type="entry name" value="KRUEPPEL-LIKE FACTOR 3"/>
    <property type="match status" value="1"/>
</dbReference>
<dbReference type="PANTHER" id="PTHR23235">
    <property type="entry name" value="KRUEPPEL-LIKE TRANSCRIPTION FACTOR"/>
    <property type="match status" value="1"/>
</dbReference>
<dbReference type="Pfam" id="PF00096">
    <property type="entry name" value="zf-C2H2"/>
    <property type="match status" value="3"/>
</dbReference>
<dbReference type="SMART" id="SM00355">
    <property type="entry name" value="ZnF_C2H2"/>
    <property type="match status" value="3"/>
</dbReference>
<dbReference type="SUPFAM" id="SSF57667">
    <property type="entry name" value="beta-beta-alpha zinc fingers"/>
    <property type="match status" value="2"/>
</dbReference>
<dbReference type="PROSITE" id="PS00028">
    <property type="entry name" value="ZINC_FINGER_C2H2_1"/>
    <property type="match status" value="3"/>
</dbReference>
<dbReference type="PROSITE" id="PS50157">
    <property type="entry name" value="ZINC_FINGER_C2H2_2"/>
    <property type="match status" value="3"/>
</dbReference>
<organism>
    <name type="scientific">Homo sapiens</name>
    <name type="common">Human</name>
    <dbReference type="NCBI Taxonomy" id="9606"/>
    <lineage>
        <taxon>Eukaryota</taxon>
        <taxon>Metazoa</taxon>
        <taxon>Chordata</taxon>
        <taxon>Craniata</taxon>
        <taxon>Vertebrata</taxon>
        <taxon>Euteleostomi</taxon>
        <taxon>Mammalia</taxon>
        <taxon>Eutheria</taxon>
        <taxon>Euarchontoglires</taxon>
        <taxon>Primates</taxon>
        <taxon>Haplorrhini</taxon>
        <taxon>Catarrhini</taxon>
        <taxon>Hominidae</taxon>
        <taxon>Homo</taxon>
    </lineage>
</organism>
<protein>
    <recommendedName>
        <fullName>Krueppel-like factor 3</fullName>
    </recommendedName>
    <alternativeName>
        <fullName>Basic krueppel-like factor</fullName>
    </alternativeName>
    <alternativeName>
        <fullName>CACCC-box-binding protein BKLF</fullName>
    </alternativeName>
    <alternativeName>
        <fullName>TEF-2</fullName>
    </alternativeName>
</protein>
<reference key="1">
    <citation type="submission" date="1999-03" db="EMBL/GenBank/DDBJ databases">
        <authorList>
            <person name="Matsumoto N."/>
            <person name="Yoshida T."/>
            <person name="Terada M."/>
        </authorList>
    </citation>
    <scope>NUCLEOTIDE SEQUENCE [MRNA] (ISOFORM 1)</scope>
</reference>
<reference key="2">
    <citation type="journal article" date="2003" name="Yi Chuan Xue Bao">
        <title>cDNA cloning, subcellular localization and tissue expression of a new human Kruppel-like transcription factor: human basic Kruppel-like factor (hBKLF).</title>
        <authorList>
            <person name="Wang M.J."/>
            <person name="Qu X.H."/>
            <person name="Wang L.S."/>
            <person name="Zhai Y."/>
            <person name="Wu S.L."/>
            <person name="He F.C."/>
        </authorList>
    </citation>
    <scope>NUCLEOTIDE SEQUENCE [MRNA] (ISOFORM 1)</scope>
    <source>
        <tissue>Liver</tissue>
    </source>
</reference>
<reference key="3">
    <citation type="journal article" date="2004" name="Genome Res.">
        <title>The status, quality, and expansion of the NIH full-length cDNA project: the Mammalian Gene Collection (MGC).</title>
        <authorList>
            <consortium name="The MGC Project Team"/>
        </authorList>
    </citation>
    <scope>NUCLEOTIDE SEQUENCE [LARGE SCALE MRNA] (ISOFORMS 1 AND 2)</scope>
    <source>
        <tissue>Hippocampus</tissue>
    </source>
</reference>
<reference key="4">
    <citation type="journal article" date="2006" name="Cell">
        <title>Global, in vivo, and site-specific phosphorylation dynamics in signaling networks.</title>
        <authorList>
            <person name="Olsen J.V."/>
            <person name="Blagoev B."/>
            <person name="Gnad F."/>
            <person name="Macek B."/>
            <person name="Kumar C."/>
            <person name="Mortensen P."/>
            <person name="Mann M."/>
        </authorList>
    </citation>
    <scope>PHOSPHORYLATION [LARGE SCALE ANALYSIS] AT SER-250</scope>
    <scope>IDENTIFICATION BY MASS SPECTROMETRY [LARGE SCALE ANALYSIS]</scope>
    <source>
        <tissue>Cervix carcinoma</tissue>
    </source>
</reference>
<reference key="5">
    <citation type="journal article" date="2008" name="Proc. Natl. Acad. Sci. U.S.A.">
        <title>A quantitative atlas of mitotic phosphorylation.</title>
        <authorList>
            <person name="Dephoure N."/>
            <person name="Zhou C."/>
            <person name="Villen J."/>
            <person name="Beausoleil S.A."/>
            <person name="Bakalarski C.E."/>
            <person name="Elledge S.J."/>
            <person name="Gygi S.P."/>
        </authorList>
    </citation>
    <scope>PHOSPHORYLATION [LARGE SCALE ANALYSIS] AT SER-92 AND SER-101</scope>
    <scope>IDENTIFICATION BY MASS SPECTROMETRY [LARGE SCALE ANALYSIS]</scope>
    <source>
        <tissue>Cervix carcinoma</tissue>
    </source>
</reference>
<reference key="6">
    <citation type="journal article" date="2010" name="Sci. Signal.">
        <title>Quantitative phosphoproteomics reveals widespread full phosphorylation site occupancy during mitosis.</title>
        <authorList>
            <person name="Olsen J.V."/>
            <person name="Vermeulen M."/>
            <person name="Santamaria A."/>
            <person name="Kumar C."/>
            <person name="Miller M.L."/>
            <person name="Jensen L.J."/>
            <person name="Gnad F."/>
            <person name="Cox J."/>
            <person name="Jensen T.S."/>
            <person name="Nigg E.A."/>
            <person name="Brunak S."/>
            <person name="Mann M."/>
        </authorList>
    </citation>
    <scope>PHOSPHORYLATION [LARGE SCALE ANALYSIS] AT SER-92 AND SER-111</scope>
    <scope>IDENTIFICATION BY MASS SPECTROMETRY [LARGE SCALE ANALYSIS]</scope>
    <source>
        <tissue>Cervix carcinoma</tissue>
    </source>
</reference>
<reference key="7">
    <citation type="journal article" date="2013" name="J. Proteome Res.">
        <title>Toward a comprehensive characterization of a human cancer cell phosphoproteome.</title>
        <authorList>
            <person name="Zhou H."/>
            <person name="Di Palma S."/>
            <person name="Preisinger C."/>
            <person name="Peng M."/>
            <person name="Polat A.N."/>
            <person name="Heck A.J."/>
            <person name="Mohammed S."/>
        </authorList>
    </citation>
    <scope>PHOSPHORYLATION [LARGE SCALE ANALYSIS] AT SER-71; SER-92; SER-101 AND SER-250</scope>
    <scope>IDENTIFICATION BY MASS SPECTROMETRY [LARGE SCALE ANALYSIS]</scope>
    <source>
        <tissue>Cervix carcinoma</tissue>
        <tissue>Erythroleukemia</tissue>
    </source>
</reference>
<reference key="8">
    <citation type="journal article" date="2014" name="J. Proteomics">
        <title>An enzyme assisted RP-RPLC approach for in-depth analysis of human liver phosphoproteome.</title>
        <authorList>
            <person name="Bian Y."/>
            <person name="Song C."/>
            <person name="Cheng K."/>
            <person name="Dong M."/>
            <person name="Wang F."/>
            <person name="Huang J."/>
            <person name="Sun D."/>
            <person name="Wang L."/>
            <person name="Ye M."/>
            <person name="Zou H."/>
        </authorList>
    </citation>
    <scope>IDENTIFICATION BY MASS SPECTROMETRY [LARGE SCALE ANALYSIS]</scope>
    <source>
        <tissue>Liver</tissue>
    </source>
</reference>
<reference key="9">
    <citation type="journal article" date="2014" name="Nat. Struct. Mol. Biol.">
        <title>Uncovering global SUMOylation signaling networks in a site-specific manner.</title>
        <authorList>
            <person name="Hendriks I.A."/>
            <person name="D'Souza R.C."/>
            <person name="Yang B."/>
            <person name="Verlaan-de Vries M."/>
            <person name="Mann M."/>
            <person name="Vertegaal A.C."/>
        </authorList>
    </citation>
    <scope>SUMOYLATION [LARGE SCALE ANALYSIS] AT LYS-198</scope>
    <scope>IDENTIFICATION BY MASS SPECTROMETRY [LARGE SCALE ANALYSIS]</scope>
</reference>
<reference key="10">
    <citation type="journal article" date="2017" name="Nat. Struct. Mol. Biol.">
        <title>Site-specific mapping of the human SUMO proteome reveals co-modification with phosphorylation.</title>
        <authorList>
            <person name="Hendriks I.A."/>
            <person name="Lyon D."/>
            <person name="Young C."/>
            <person name="Jensen L.J."/>
            <person name="Vertegaal A.C."/>
            <person name="Nielsen M.L."/>
        </authorList>
    </citation>
    <scope>SUMOYLATION [LARGE SCALE ANALYSIS] AT LYS-68; LYS-196 AND LYS-198</scope>
    <scope>IDENTIFICATION BY MASS SPECTROMETRY [LARGE SCALE ANALYSIS]</scope>
</reference>
<reference key="11">
    <citation type="journal article" date="2020" name="Cell. Mol. Life Sci.">
        <title>The evolution of the 9aaTAD domain in Sp2 proteins: inactivation with valines and intron reservoirs.</title>
        <authorList>
            <person name="Piskacek M."/>
            <person name="Havelka M."/>
            <person name="Jendruchova K."/>
            <person name="Knight A."/>
            <person name="Keegan L.P."/>
        </authorList>
    </citation>
    <scope>INACTIVATION OF 9AATAD MOTIF</scope>
</reference>
<proteinExistence type="evidence at protein level"/>
<sequence length="345" mass="38829">MLMFDPVPVKQEAMDPVSVSYPSNYMESMKPNKYGVIYSTPLPEKFFQTPEGLSHGIQMEPVDLTVNKRSSPPSAGNSPSSLKFPSSHRRASPGLSMPSSSPPIKKYSPPSPGVQPFGVPLSMPPVMAAALSRHGIRSPGILPVIQPVVVQPVPFMYTSHLQQPLMVSLSEEMENSSSSMQVPVIESYEKPISQKKIKIEPGIEPQRTDYYPEEMSPPLMNSVSPPQALLQENHPSVIVQPGKRPLPVESPDTQRKRRIHRCDYDGCNKVYTKSSHLKAHRRTHTGEKPYKCTWEGCTWKFARSDELTRHFRKHTGIKPFQCPDCDRSFSRSDHLALHRKRHMLV</sequence>
<accession>P57682</accession>
<accession>Q6PIR1</accession>
<accession>Q86TN0</accession>
<accession>Q9P2X6</accession>
<feature type="chain" id="PRO_0000047165" description="Krueppel-like factor 3">
    <location>
        <begin position="1"/>
        <end position="345"/>
    </location>
</feature>
<feature type="zinc finger region" description="C2H2-type 1" evidence="3">
    <location>
        <begin position="260"/>
        <end position="284"/>
    </location>
</feature>
<feature type="zinc finger region" description="C2H2-type 2" evidence="3">
    <location>
        <begin position="290"/>
        <end position="314"/>
    </location>
</feature>
<feature type="zinc finger region" description="C2H2-type 3" evidence="3">
    <location>
        <begin position="320"/>
        <end position="342"/>
    </location>
</feature>
<feature type="region of interest" description="Repressor domain">
    <location>
        <begin position="1"/>
        <end position="74"/>
    </location>
</feature>
<feature type="region of interest" description="Disordered" evidence="4">
    <location>
        <begin position="66"/>
        <end position="112"/>
    </location>
</feature>
<feature type="short sequence motif" description="9aaTAD; inactive" evidence="5">
    <location>
        <begin position="60"/>
        <end position="68"/>
    </location>
</feature>
<feature type="short sequence motif" description="CTBP-binding motif">
    <location>
        <begin position="61"/>
        <end position="65"/>
    </location>
</feature>
<feature type="compositionally biased region" description="Low complexity" evidence="4">
    <location>
        <begin position="70"/>
        <end position="81"/>
    </location>
</feature>
<feature type="compositionally biased region" description="Low complexity" evidence="4">
    <location>
        <begin position="92"/>
        <end position="108"/>
    </location>
</feature>
<feature type="modified residue" description="Phosphoserine" evidence="11">
    <location>
        <position position="71"/>
    </location>
</feature>
<feature type="modified residue" description="Phosphoserine" evidence="9 10 11">
    <location>
        <position position="92"/>
    </location>
</feature>
<feature type="modified residue" description="Phosphoserine" evidence="9 11">
    <location>
        <position position="101"/>
    </location>
</feature>
<feature type="modified residue" description="Phosphoserine" evidence="2">
    <location>
        <position position="108"/>
    </location>
</feature>
<feature type="modified residue" description="Phosphoserine" evidence="10">
    <location>
        <position position="111"/>
    </location>
</feature>
<feature type="modified residue" description="Phosphoserine" evidence="2">
    <location>
        <position position="216"/>
    </location>
</feature>
<feature type="modified residue" description="Phosphoserine" evidence="2">
    <location>
        <position position="224"/>
    </location>
</feature>
<feature type="modified residue" description="Phosphoserine" evidence="8 11">
    <location>
        <position position="250"/>
    </location>
</feature>
<feature type="cross-link" description="Glycyl lysine isopeptide (Lys-Gly) (interchain with G-Cter in SUMO)" evidence="1">
    <location>
        <position position="10"/>
    </location>
</feature>
<feature type="cross-link" description="Glycyl lysine isopeptide (Lys-Gly) (interchain with G-Cter in SUMO2)" evidence="13">
    <location>
        <position position="68"/>
    </location>
</feature>
<feature type="cross-link" description="Glycyl lysine isopeptide (Lys-Gly) (interchain with G-Cter in SUMO2)" evidence="13">
    <location>
        <position position="196"/>
    </location>
</feature>
<feature type="cross-link" description="Glycyl lysine isopeptide (Lys-Gly) (interchain with G-Cter in SUMO2)" evidence="12 13">
    <location>
        <position position="198"/>
    </location>
</feature>
<feature type="splice variant" id="VSP_014532" description="In isoform 2." evidence="6">
    <location>
        <begin position="233"/>
        <end position="345"/>
    </location>
</feature>
<feature type="sequence variant" id="VAR_052715" description="In dbSNP:rs17616226.">
    <original>R</original>
    <variation>S</variation>
    <location>
        <position position="207"/>
    </location>
</feature>
<feature type="sequence conflict" description="In Ref. 3; AAH51687." evidence="7" ref="3">
    <original>P</original>
    <variation>R</variation>
    <location>
        <position position="85"/>
    </location>
</feature>
<feature type="sequence conflict" description="In Ref. 3; AAH51687." evidence="7" ref="3">
    <original>P</original>
    <variation>H</variation>
    <location>
        <position position="116"/>
    </location>
</feature>
<feature type="sequence conflict" description="In Ref. 3; AAH30662." evidence="7" ref="3">
    <original>D</original>
    <variation>G</variation>
    <location>
        <position position="305"/>
    </location>
</feature>
<comment type="function">
    <text evidence="1">Binds to the CACCC box of erythroid cell-expressed genes. May play a role in hematopoiesis (By similarity).</text>
</comment>
<comment type="subunit">
    <text evidence="1">Monomer.</text>
</comment>
<comment type="interaction">
    <interactant intactId="EBI-8472267">
        <id>P57682</id>
    </interactant>
    <interactant intactId="EBI-11954292">
        <id>Q86V38</id>
        <label>ATN1</label>
    </interactant>
    <organismsDiffer>false</organismsDiffer>
    <experiments>3</experiments>
</comment>
<comment type="interaction">
    <interactant intactId="EBI-8472267">
        <id>P57682</id>
    </interactant>
    <interactant intactId="EBI-930964">
        <id>P54253</id>
        <label>ATXN1</label>
    </interactant>
    <organismsDiffer>false</organismsDiffer>
    <experiments>4</experiments>
</comment>
<comment type="interaction">
    <interactant intactId="EBI-8472267">
        <id>P57682</id>
    </interactant>
    <interactant intactId="EBI-11282723">
        <id>Q9Y5Z0</id>
        <label>BACE2</label>
    </interactant>
    <organismsDiffer>false</organismsDiffer>
    <experiments>3</experiments>
</comment>
<comment type="interaction">
    <interactant intactId="EBI-8472267">
        <id>P57682</id>
    </interactant>
    <interactant intactId="EBI-10988864">
        <id>P46379-2</id>
        <label>BAG6</label>
    </interactant>
    <organismsDiffer>false</organismsDiffer>
    <experiments>3</experiments>
</comment>
<comment type="interaction">
    <interactant intactId="EBI-8472267">
        <id>P57682</id>
    </interactant>
    <interactant intactId="EBI-6875961">
        <id>P02489</id>
        <label>CRYAA</label>
    </interactant>
    <organismsDiffer>false</organismsDiffer>
    <experiments>3</experiments>
</comment>
<comment type="interaction">
    <interactant intactId="EBI-8472267">
        <id>P57682</id>
    </interactant>
    <interactant intactId="EBI-10171858">
        <id>Q13363-2</id>
        <label>CTBP1</label>
    </interactant>
    <organismsDiffer>false</organismsDiffer>
    <experiments>3</experiments>
</comment>
<comment type="interaction">
    <interactant intactId="EBI-8472267">
        <id>P57682</id>
    </interactant>
    <interactant intactId="EBI-10171902">
        <id>P56545-3</id>
        <label>CTBP2</label>
    </interactant>
    <organismsDiffer>false</organismsDiffer>
    <experiments>3</experiments>
</comment>
<comment type="interaction">
    <interactant intactId="EBI-8472267">
        <id>P57682</id>
    </interactant>
    <interactant intactId="EBI-715104">
        <id>Q9NX09</id>
        <label>DDIT4</label>
    </interactant>
    <organismsDiffer>false</organismsDiffer>
    <experiments>3</experiments>
</comment>
<comment type="interaction">
    <interactant intactId="EBI-8472267">
        <id>P57682</id>
    </interactant>
    <interactant intactId="EBI-739789">
        <id>Q92997</id>
        <label>DVL3</label>
    </interactant>
    <organismsDiffer>false</organismsDiffer>
    <experiments>3</experiments>
</comment>
<comment type="interaction">
    <interactant intactId="EBI-8472267">
        <id>P57682</id>
    </interactant>
    <interactant intactId="EBI-10174566">
        <id>A2ABF9</id>
        <label>EHMT2</label>
    </interactant>
    <organismsDiffer>false</organismsDiffer>
    <experiments>3</experiments>
</comment>
<comment type="interaction">
    <interactant intactId="EBI-8472267">
        <id>P57682</id>
    </interactant>
    <interactant intactId="EBI-744366">
        <id>Q96KQ7</id>
        <label>EHMT2</label>
    </interactant>
    <organismsDiffer>false</organismsDiffer>
    <experiments>4</experiments>
</comment>
<comment type="interaction">
    <interactant intactId="EBI-8472267">
        <id>P57682</id>
    </interactant>
    <interactant intactId="EBI-348399">
        <id>P22607</id>
        <label>FGFR3</label>
    </interactant>
    <organismsDiffer>false</organismsDiffer>
    <experiments>3</experiments>
</comment>
<comment type="interaction">
    <interactant intactId="EBI-8472267">
        <id>P57682</id>
    </interactant>
    <interactant intactId="EBI-741101">
        <id>Q13643</id>
        <label>FHL3</label>
    </interactant>
    <organismsDiffer>false</organismsDiffer>
    <experiments>11</experiments>
</comment>
<comment type="interaction">
    <interactant intactId="EBI-8472267">
        <id>P57682</id>
    </interactant>
    <interactant intactId="EBI-25913156">
        <id>O14908-2</id>
        <label>GIPC1</label>
    </interactant>
    <organismsDiffer>false</organismsDiffer>
    <experiments>3</experiments>
</comment>
<comment type="interaction">
    <interactant intactId="EBI-8472267">
        <id>P57682</id>
    </interactant>
    <interactant intactId="EBI-747754">
        <id>P28799</id>
        <label>GRN</label>
    </interactant>
    <organismsDiffer>false</organismsDiffer>
    <experiments>4</experiments>
</comment>
<comment type="interaction">
    <interactant intactId="EBI-8472267">
        <id>P57682</id>
    </interactant>
    <interactant intactId="EBI-350145">
        <id>P01112</id>
        <label>HRAS</label>
    </interactant>
    <organismsDiffer>false</organismsDiffer>
    <experiments>3</experiments>
</comment>
<comment type="interaction">
    <interactant intactId="EBI-8472267">
        <id>P57682</id>
    </interactant>
    <interactant intactId="EBI-352682">
        <id>P04792</id>
        <label>HSPB1</label>
    </interactant>
    <organismsDiffer>false</organismsDiffer>
    <experiments>3</experiments>
</comment>
<comment type="interaction">
    <interactant intactId="EBI-8472267">
        <id>P57682</id>
    </interactant>
    <interactant intactId="EBI-517086">
        <id>O43464</id>
        <label>HTRA2</label>
    </interactant>
    <organismsDiffer>false</organismsDiffer>
    <experiments>3</experiments>
</comment>
<comment type="interaction">
    <interactant intactId="EBI-8472267">
        <id>P57682</id>
    </interactant>
    <interactant intactId="EBI-466029">
        <id>P42858</id>
        <label>HTT</label>
    </interactant>
    <organismsDiffer>false</organismsDiffer>
    <experiments>6</experiments>
</comment>
<comment type="interaction">
    <interactant intactId="EBI-8472267">
        <id>P57682</id>
    </interactant>
    <interactant intactId="EBI-751501">
        <id>Q9Y2W7</id>
        <label>KCNIP3</label>
    </interactant>
    <organismsDiffer>false</organismsDiffer>
    <experiments>3</experiments>
</comment>
<comment type="interaction">
    <interactant intactId="EBI-8472267">
        <id>P57682</id>
    </interactant>
    <interactant intactId="EBI-10975473">
        <id>O60333-2</id>
        <label>KIF1B</label>
    </interactant>
    <organismsDiffer>false</organismsDiffer>
    <experiments>3</experiments>
</comment>
<comment type="interaction">
    <interactant intactId="EBI-8472267">
        <id>P57682</id>
    </interactant>
    <interactant intactId="EBI-948266">
        <id>O14901</id>
        <label>KLF11</label>
    </interactant>
    <organismsDiffer>false</organismsDiffer>
    <experiments>3</experiments>
</comment>
<comment type="interaction">
    <interactant intactId="EBI-8472267">
        <id>P57682</id>
    </interactant>
    <interactant intactId="EBI-2432309">
        <id>Q92876</id>
        <label>KLK6</label>
    </interactant>
    <organismsDiffer>false</organismsDiffer>
    <experiments>3</experiments>
</comment>
<comment type="interaction">
    <interactant intactId="EBI-8472267">
        <id>P57682</id>
    </interactant>
    <interactant intactId="EBI-10258746">
        <id>Q9UPM6</id>
        <label>LHX6</label>
    </interactant>
    <organismsDiffer>false</organismsDiffer>
    <experiments>3</experiments>
</comment>
<comment type="interaction">
    <interactant intactId="EBI-8472267">
        <id>P57682</id>
    </interactant>
    <interactant intactId="EBI-8474075">
        <id>Q68G74</id>
        <label>LHX8</label>
    </interactant>
    <organismsDiffer>false</organismsDiffer>
    <experiments>3</experiments>
</comment>
<comment type="interaction">
    <interactant intactId="EBI-8472267">
        <id>P57682</id>
    </interactant>
    <interactant intactId="EBI-473196">
        <id>Q5T3J3</id>
        <label>LRIF1</label>
    </interactant>
    <organismsDiffer>false</organismsDiffer>
    <experiments>3</experiments>
</comment>
<comment type="interaction">
    <interactant intactId="EBI-8472267">
        <id>P57682</id>
    </interactant>
    <interactant intactId="EBI-2811583">
        <id>Q9BVL2</id>
        <label>NUP58</label>
    </interactant>
    <organismsDiffer>false</organismsDiffer>
    <experiments>3</experiments>
</comment>
<comment type="interaction">
    <interactant intactId="EBI-8472267">
        <id>P57682</id>
    </interactant>
    <interactant intactId="EBI-9087860">
        <id>P32243-2</id>
        <label>OTX2</label>
    </interactant>
    <organismsDiffer>false</organismsDiffer>
    <experiments>3</experiments>
</comment>
<comment type="interaction">
    <interactant intactId="EBI-8472267">
        <id>P57682</id>
    </interactant>
    <interactant intactId="EBI-988601">
        <id>O43933</id>
        <label>PEX1</label>
    </interactant>
    <organismsDiffer>false</organismsDiffer>
    <experiments>3</experiments>
</comment>
<comment type="interaction">
    <interactant intactId="EBI-8472267">
        <id>P57682</id>
    </interactant>
    <interactant intactId="EBI-749195">
        <id>P60891</id>
        <label>PRPS1</label>
    </interactant>
    <organismsDiffer>false</organismsDiffer>
    <experiments>3</experiments>
</comment>
<comment type="interaction">
    <interactant intactId="EBI-8472267">
        <id>P57682</id>
    </interactant>
    <interactant intactId="EBI-355744">
        <id>Q12933</id>
        <label>TRAF2</label>
    </interactant>
    <organismsDiffer>false</organismsDiffer>
    <experiments>6</experiments>
</comment>
<comment type="interaction">
    <interactant intactId="EBI-8472267">
        <id>P57682</id>
    </interactant>
    <interactant intactId="EBI-720609">
        <id>O76024</id>
        <label>WFS1</label>
    </interactant>
    <organismsDiffer>false</organismsDiffer>
    <experiments>3</experiments>
</comment>
<comment type="subcellular location">
    <subcellularLocation>
        <location evidence="7">Nucleus</location>
    </subcellularLocation>
</comment>
<comment type="alternative products">
    <event type="alternative splicing"/>
    <isoform>
        <id>P57682-1</id>
        <name>1</name>
        <sequence type="displayed"/>
    </isoform>
    <isoform>
        <id>P57682-2</id>
        <name>2</name>
        <sequence type="described" ref="VSP_014532"/>
    </isoform>
</comment>
<comment type="domain">
    <text evidence="5">The 9aaTAD motif is a transactivation domain present in a large number of yeast and animal transcription factors. In KLF3, the motif is inactive.</text>
</comment>
<comment type="PTM">
    <text evidence="1">Sumoylated with SUMO1. Sumoylation is enhanced by PIAS1, PIAS2alpha and PIAS2beta, and PIAS4, but not by Pc2. Enhances transcriptional repression, but has no effect on DNA binding. Sumoylation on Lys-198 is the major site (By similarity).</text>
</comment>
<comment type="miscellaneous">
    <molecule>Isoform 2</molecule>
    <text evidence="7">May be due to intron retention.</text>
</comment>
<comment type="similarity">
    <text evidence="7">Belongs to the krueppel C2H2-type zinc-finger protein family.</text>
</comment>